<dbReference type="EMBL" id="X54357">
    <property type="protein sequence ID" value="CAA38241.1"/>
    <property type="molecule type" value="mRNA"/>
</dbReference>
<dbReference type="EMBL" id="Z18288">
    <property type="protein sequence ID" value="CAA79159.1"/>
    <property type="molecule type" value="Genomic_DNA"/>
</dbReference>
<dbReference type="PIR" id="S33617">
    <property type="entry name" value="S33617"/>
</dbReference>
<dbReference type="SMR" id="P25794"/>
<dbReference type="TCDB" id="1.A.8.11.1">
    <property type="family name" value="the major intrinsic protein (mip) family"/>
</dbReference>
<dbReference type="OrthoDB" id="3222at2759"/>
<dbReference type="GO" id="GO:0005886">
    <property type="term" value="C:plasma membrane"/>
    <property type="evidence" value="ECO:0007669"/>
    <property type="project" value="UniProtKB-SubCell"/>
</dbReference>
<dbReference type="GO" id="GO:0015267">
    <property type="term" value="F:channel activity"/>
    <property type="evidence" value="ECO:0007669"/>
    <property type="project" value="InterPro"/>
</dbReference>
<dbReference type="CDD" id="cd00333">
    <property type="entry name" value="MIP"/>
    <property type="match status" value="1"/>
</dbReference>
<dbReference type="FunFam" id="1.20.1080.10:FF:000001">
    <property type="entry name" value="Probable aquaporin PIP1-2"/>
    <property type="match status" value="1"/>
</dbReference>
<dbReference type="Gene3D" id="1.20.1080.10">
    <property type="entry name" value="Glycerol uptake facilitator protein"/>
    <property type="match status" value="1"/>
</dbReference>
<dbReference type="InterPro" id="IPR023271">
    <property type="entry name" value="Aquaporin-like"/>
</dbReference>
<dbReference type="InterPro" id="IPR034294">
    <property type="entry name" value="Aquaporin_transptr"/>
</dbReference>
<dbReference type="InterPro" id="IPR000425">
    <property type="entry name" value="MIP"/>
</dbReference>
<dbReference type="InterPro" id="IPR022357">
    <property type="entry name" value="MIP_CS"/>
</dbReference>
<dbReference type="NCBIfam" id="TIGR00861">
    <property type="entry name" value="MIP"/>
    <property type="match status" value="1"/>
</dbReference>
<dbReference type="PANTHER" id="PTHR45687">
    <property type="entry name" value="AQUAPORIN OR AQUAGLYCEROPORIN RELATED"/>
    <property type="match status" value="1"/>
</dbReference>
<dbReference type="Pfam" id="PF00230">
    <property type="entry name" value="MIP"/>
    <property type="match status" value="1"/>
</dbReference>
<dbReference type="PRINTS" id="PR00783">
    <property type="entry name" value="MINTRINSICP"/>
</dbReference>
<dbReference type="SUPFAM" id="SSF81338">
    <property type="entry name" value="Aquaporin-like"/>
    <property type="match status" value="1"/>
</dbReference>
<dbReference type="PROSITE" id="PS00221">
    <property type="entry name" value="MIP"/>
    <property type="match status" value="1"/>
</dbReference>
<reference key="1">
    <citation type="journal article" date="1990" name="Plant Mol. Biol.">
        <title>Turgor-responsive gene transcription and RNA levels increase rapidly when pea shoots are wilted. Sequence and expression of three inducible genes.</title>
        <authorList>
            <person name="Guerrero F.D."/>
            <person name="Jones J.T."/>
            <person name="Mullet J.E."/>
        </authorList>
    </citation>
    <scope>NUCLEOTIDE SEQUENCE</scope>
    <source>
        <strain>cv. Progress No. 9</strain>
    </source>
</reference>
<reference key="2">
    <citation type="journal article" date="1993" name="Plant Mol. Biol.">
        <title>Tissue-specific expression of a plant turgor-responsive gene with amino acid sequence homology to transport-facilitating proteins.</title>
        <authorList>
            <person name="Guerrero F.D."/>
            <person name="Crossland L."/>
        </authorList>
    </citation>
    <scope>NUCLEOTIDE SEQUENCE [GENOMIC DNA]</scope>
</reference>
<accession>P25794</accession>
<accession>Q41006</accession>
<name>PIP2_PEA</name>
<proteinExistence type="evidence at transcript level"/>
<feature type="chain" id="PRO_0000064060" description="Probable aquaporin PIP-type 7a">
    <location>
        <begin position="1"/>
        <end position="289"/>
    </location>
</feature>
<feature type="topological domain" description="Cytoplasmic" evidence="2">
    <location>
        <begin position="1"/>
        <end position="57"/>
    </location>
</feature>
<feature type="transmembrane region" description="Helical; Name=1" evidence="2">
    <location>
        <begin position="58"/>
        <end position="78"/>
    </location>
</feature>
<feature type="topological domain" description="Extracellular" evidence="2">
    <location>
        <begin position="79"/>
        <end position="91"/>
    </location>
</feature>
<feature type="transmembrane region" description="Helical; Name=2" evidence="2">
    <location>
        <begin position="92"/>
        <end position="112"/>
    </location>
</feature>
<feature type="topological domain" description="Cytoplasmic" evidence="2">
    <location>
        <begin position="113"/>
        <end position="135"/>
    </location>
</feature>
<feature type="transmembrane region" description="Helical; Name=3" evidence="2">
    <location>
        <begin position="136"/>
        <end position="156"/>
    </location>
</feature>
<feature type="topological domain" description="Extracellular" evidence="2">
    <location>
        <begin position="157"/>
        <end position="178"/>
    </location>
</feature>
<feature type="transmembrane region" description="Helical; Name=4" evidence="2">
    <location>
        <begin position="179"/>
        <end position="199"/>
    </location>
</feature>
<feature type="topological domain" description="Cytoplasmic" evidence="2">
    <location>
        <begin position="200"/>
        <end position="212"/>
    </location>
</feature>
<feature type="transmembrane region" description="Helical; Name=5" evidence="2">
    <location>
        <begin position="213"/>
        <end position="233"/>
    </location>
</feature>
<feature type="topological domain" description="Extracellular" evidence="2">
    <location>
        <begin position="234"/>
        <end position="260"/>
    </location>
</feature>
<feature type="transmembrane region" description="Helical; Name=6" evidence="2">
    <location>
        <begin position="261"/>
        <end position="281"/>
    </location>
</feature>
<feature type="topological domain" description="Cytoplasmic" evidence="2">
    <location>
        <begin position="282"/>
        <end position="289"/>
    </location>
</feature>
<feature type="region of interest" description="Disordered" evidence="3">
    <location>
        <begin position="1"/>
        <end position="39"/>
    </location>
</feature>
<feature type="short sequence motif" description="NPA 1">
    <location>
        <begin position="117"/>
        <end position="119"/>
    </location>
</feature>
<feature type="short sequence motif" description="NPA 2">
    <location>
        <begin position="239"/>
        <end position="241"/>
    </location>
</feature>
<evidence type="ECO:0000250" key="1"/>
<evidence type="ECO:0000255" key="2"/>
<evidence type="ECO:0000256" key="3">
    <source>
        <dbReference type="SAM" id="MobiDB-lite"/>
    </source>
</evidence>
<evidence type="ECO:0000305" key="4"/>
<keyword id="KW-1003">Cell membrane</keyword>
<keyword id="KW-0472">Membrane</keyword>
<keyword id="KW-0677">Repeat</keyword>
<keyword id="KW-0346">Stress response</keyword>
<keyword id="KW-0812">Transmembrane</keyword>
<keyword id="KW-1133">Transmembrane helix</keyword>
<keyword id="KW-0813">Transport</keyword>
<gene>
    <name type="primary">TRG-31</name>
</gene>
<sequence length="289" mass="31020">MEAKEQDVSLGANKFPERQPLGIAAQSQDEPKDYQEPPPAPLFEPSELTSWSFYRAGIAEFIATFLFLYITVLTVMGVVRESSKCKTVGIQGIAWAFGGMIFALVYCTAGISGGHINPAVTFGLFLARKLSLTRAIFYMVMQVLGAICGAGVVKGFEGKQRFGDLNGGANFVAPGYTKGDGLGAEIVGTFILVYTVFSATDAKRSARDSHVPILAPLPIGFAVFLVHLATIPITGTGINPARSLGAAIVFNKKIGWNDHWIFWVGPFIGAALAALYHQVVIRAIPFKSK</sequence>
<protein>
    <recommendedName>
        <fullName>Probable aquaporin PIP-type 7a</fullName>
    </recommendedName>
    <alternativeName>
        <fullName>Turgor-responsive protein 31</fullName>
    </alternativeName>
    <alternativeName>
        <fullName>Turgor-responsive protein 7a</fullName>
    </alternativeName>
</protein>
<comment type="function">
    <text evidence="1">Aquaporins facilitate the transport of water and small neutral solutes across cell membranes.</text>
</comment>
<comment type="subcellular location">
    <subcellularLocation>
        <location evidence="1">Cell membrane</location>
        <topology evidence="1">Multi-pass membrane protein</topology>
    </subcellularLocation>
</comment>
<comment type="induction">
    <text>By water stress, heat shock and to a small extent by abscisic acid (ABA). Induced within 30 minutes after the loss of leaf turgor.</text>
</comment>
<comment type="domain">
    <text>Aquaporins contain two tandem repeats each containing three membrane-spanning domains and a pore-forming loop with the signature motif Asn-Pro-Ala (NPA).</text>
</comment>
<comment type="similarity">
    <text evidence="4">Belongs to the MIP/aquaporin (TC 1.A.8) family. PIP (TC 1.A.8.11) subfamily.</text>
</comment>
<organism>
    <name type="scientific">Pisum sativum</name>
    <name type="common">Garden pea</name>
    <name type="synonym">Lathyrus oleraceus</name>
    <dbReference type="NCBI Taxonomy" id="3888"/>
    <lineage>
        <taxon>Eukaryota</taxon>
        <taxon>Viridiplantae</taxon>
        <taxon>Streptophyta</taxon>
        <taxon>Embryophyta</taxon>
        <taxon>Tracheophyta</taxon>
        <taxon>Spermatophyta</taxon>
        <taxon>Magnoliopsida</taxon>
        <taxon>eudicotyledons</taxon>
        <taxon>Gunneridae</taxon>
        <taxon>Pentapetalae</taxon>
        <taxon>rosids</taxon>
        <taxon>fabids</taxon>
        <taxon>Fabales</taxon>
        <taxon>Fabaceae</taxon>
        <taxon>Papilionoideae</taxon>
        <taxon>50 kb inversion clade</taxon>
        <taxon>NPAAA clade</taxon>
        <taxon>Hologalegina</taxon>
        <taxon>IRL clade</taxon>
        <taxon>Fabeae</taxon>
        <taxon>Pisum</taxon>
    </lineage>
</organism>